<feature type="chain" id="PRO_0000251249" description="BTB/POZ domain-containing protein KCTD6">
    <location>
        <begin position="1"/>
        <end position="237"/>
    </location>
</feature>
<feature type="domain" description="BTB">
    <location>
        <begin position="12"/>
        <end position="81"/>
    </location>
</feature>
<feature type="region of interest" description="Interaction with ANK1 isoform Mu7" evidence="1">
    <location>
        <begin position="1"/>
        <end position="104"/>
    </location>
</feature>
<feature type="region of interest" description="Interaction with CUL3" evidence="1">
    <location>
        <begin position="10"/>
        <end position="110"/>
    </location>
</feature>
<feature type="region of interest" description="Interaction with USP21" evidence="1">
    <location>
        <begin position="113"/>
        <end position="187"/>
    </location>
</feature>
<feature type="sequence conflict" description="In Ref. 1; BAE34793." evidence="3" ref="1">
    <original>R</original>
    <variation>S</variation>
    <location>
        <position position="233"/>
    </location>
</feature>
<evidence type="ECO:0000250" key="1">
    <source>
        <dbReference type="UniProtKB" id="Q8NC69"/>
    </source>
</evidence>
<evidence type="ECO:0000269" key="2">
    <source>
    </source>
</evidence>
<evidence type="ECO:0000305" key="3"/>
<reference key="1">
    <citation type="journal article" date="2005" name="Science">
        <title>The transcriptional landscape of the mammalian genome.</title>
        <authorList>
            <person name="Carninci P."/>
            <person name="Kasukawa T."/>
            <person name="Katayama S."/>
            <person name="Gough J."/>
            <person name="Frith M.C."/>
            <person name="Maeda N."/>
            <person name="Oyama R."/>
            <person name="Ravasi T."/>
            <person name="Lenhard B."/>
            <person name="Wells C."/>
            <person name="Kodzius R."/>
            <person name="Shimokawa K."/>
            <person name="Bajic V.B."/>
            <person name="Brenner S.E."/>
            <person name="Batalov S."/>
            <person name="Forrest A.R."/>
            <person name="Zavolan M."/>
            <person name="Davis M.J."/>
            <person name="Wilming L.G."/>
            <person name="Aidinis V."/>
            <person name="Allen J.E."/>
            <person name="Ambesi-Impiombato A."/>
            <person name="Apweiler R."/>
            <person name="Aturaliya R.N."/>
            <person name="Bailey T.L."/>
            <person name="Bansal M."/>
            <person name="Baxter L."/>
            <person name="Beisel K.W."/>
            <person name="Bersano T."/>
            <person name="Bono H."/>
            <person name="Chalk A.M."/>
            <person name="Chiu K.P."/>
            <person name="Choudhary V."/>
            <person name="Christoffels A."/>
            <person name="Clutterbuck D.R."/>
            <person name="Crowe M.L."/>
            <person name="Dalla E."/>
            <person name="Dalrymple B.P."/>
            <person name="de Bono B."/>
            <person name="Della Gatta G."/>
            <person name="di Bernardo D."/>
            <person name="Down T."/>
            <person name="Engstrom P."/>
            <person name="Fagiolini M."/>
            <person name="Faulkner G."/>
            <person name="Fletcher C.F."/>
            <person name="Fukushima T."/>
            <person name="Furuno M."/>
            <person name="Futaki S."/>
            <person name="Gariboldi M."/>
            <person name="Georgii-Hemming P."/>
            <person name="Gingeras T.R."/>
            <person name="Gojobori T."/>
            <person name="Green R.E."/>
            <person name="Gustincich S."/>
            <person name="Harbers M."/>
            <person name="Hayashi Y."/>
            <person name="Hensch T.K."/>
            <person name="Hirokawa N."/>
            <person name="Hill D."/>
            <person name="Huminiecki L."/>
            <person name="Iacono M."/>
            <person name="Ikeo K."/>
            <person name="Iwama A."/>
            <person name="Ishikawa T."/>
            <person name="Jakt M."/>
            <person name="Kanapin A."/>
            <person name="Katoh M."/>
            <person name="Kawasawa Y."/>
            <person name="Kelso J."/>
            <person name="Kitamura H."/>
            <person name="Kitano H."/>
            <person name="Kollias G."/>
            <person name="Krishnan S.P."/>
            <person name="Kruger A."/>
            <person name="Kummerfeld S.K."/>
            <person name="Kurochkin I.V."/>
            <person name="Lareau L.F."/>
            <person name="Lazarevic D."/>
            <person name="Lipovich L."/>
            <person name="Liu J."/>
            <person name="Liuni S."/>
            <person name="McWilliam S."/>
            <person name="Madan Babu M."/>
            <person name="Madera M."/>
            <person name="Marchionni L."/>
            <person name="Matsuda H."/>
            <person name="Matsuzawa S."/>
            <person name="Miki H."/>
            <person name="Mignone F."/>
            <person name="Miyake S."/>
            <person name="Morris K."/>
            <person name="Mottagui-Tabar S."/>
            <person name="Mulder N."/>
            <person name="Nakano N."/>
            <person name="Nakauchi H."/>
            <person name="Ng P."/>
            <person name="Nilsson R."/>
            <person name="Nishiguchi S."/>
            <person name="Nishikawa S."/>
            <person name="Nori F."/>
            <person name="Ohara O."/>
            <person name="Okazaki Y."/>
            <person name="Orlando V."/>
            <person name="Pang K.C."/>
            <person name="Pavan W.J."/>
            <person name="Pavesi G."/>
            <person name="Pesole G."/>
            <person name="Petrovsky N."/>
            <person name="Piazza S."/>
            <person name="Reed J."/>
            <person name="Reid J.F."/>
            <person name="Ring B.Z."/>
            <person name="Ringwald M."/>
            <person name="Rost B."/>
            <person name="Ruan Y."/>
            <person name="Salzberg S.L."/>
            <person name="Sandelin A."/>
            <person name="Schneider C."/>
            <person name="Schoenbach C."/>
            <person name="Sekiguchi K."/>
            <person name="Semple C.A."/>
            <person name="Seno S."/>
            <person name="Sessa L."/>
            <person name="Sheng Y."/>
            <person name="Shibata Y."/>
            <person name="Shimada H."/>
            <person name="Shimada K."/>
            <person name="Silva D."/>
            <person name="Sinclair B."/>
            <person name="Sperling S."/>
            <person name="Stupka E."/>
            <person name="Sugiura K."/>
            <person name="Sultana R."/>
            <person name="Takenaka Y."/>
            <person name="Taki K."/>
            <person name="Tammoja K."/>
            <person name="Tan S.L."/>
            <person name="Tang S."/>
            <person name="Taylor M.S."/>
            <person name="Tegner J."/>
            <person name="Teichmann S.A."/>
            <person name="Ueda H.R."/>
            <person name="van Nimwegen E."/>
            <person name="Verardo R."/>
            <person name="Wei C.L."/>
            <person name="Yagi K."/>
            <person name="Yamanishi H."/>
            <person name="Zabarovsky E."/>
            <person name="Zhu S."/>
            <person name="Zimmer A."/>
            <person name="Hide W."/>
            <person name="Bult C."/>
            <person name="Grimmond S.M."/>
            <person name="Teasdale R.D."/>
            <person name="Liu E.T."/>
            <person name="Brusic V."/>
            <person name="Quackenbush J."/>
            <person name="Wahlestedt C."/>
            <person name="Mattick J.S."/>
            <person name="Hume D.A."/>
            <person name="Kai C."/>
            <person name="Sasaki D."/>
            <person name="Tomaru Y."/>
            <person name="Fukuda S."/>
            <person name="Kanamori-Katayama M."/>
            <person name="Suzuki M."/>
            <person name="Aoki J."/>
            <person name="Arakawa T."/>
            <person name="Iida J."/>
            <person name="Imamura K."/>
            <person name="Itoh M."/>
            <person name="Kato T."/>
            <person name="Kawaji H."/>
            <person name="Kawagashira N."/>
            <person name="Kawashima T."/>
            <person name="Kojima M."/>
            <person name="Kondo S."/>
            <person name="Konno H."/>
            <person name="Nakano K."/>
            <person name="Ninomiya N."/>
            <person name="Nishio T."/>
            <person name="Okada M."/>
            <person name="Plessy C."/>
            <person name="Shibata K."/>
            <person name="Shiraki T."/>
            <person name="Suzuki S."/>
            <person name="Tagami M."/>
            <person name="Waki K."/>
            <person name="Watahiki A."/>
            <person name="Okamura-Oho Y."/>
            <person name="Suzuki H."/>
            <person name="Kawai J."/>
            <person name="Hayashizaki Y."/>
        </authorList>
    </citation>
    <scope>NUCLEOTIDE SEQUENCE [LARGE SCALE MRNA]</scope>
    <source>
        <strain>C57BL/6J</strain>
        <tissue>Embryo</tissue>
        <tissue>Visual cortex</tissue>
    </source>
</reference>
<reference key="2">
    <citation type="journal article" date="2004" name="Genome Res.">
        <title>The status, quality, and expansion of the NIH full-length cDNA project: the Mammalian Gene Collection (MGC).</title>
        <authorList>
            <consortium name="The MGC Project Team"/>
        </authorList>
    </citation>
    <scope>NUCLEOTIDE SEQUENCE [LARGE SCALE MRNA]</scope>
    <source>
        <strain>FVB/N</strain>
        <tissue>Mammary tumor</tissue>
    </source>
</reference>
<reference key="3">
    <citation type="journal article" date="2011" name="Neoplasia">
        <title>Identification and characterization of KCASH2 and KCASH3, 2 novel Cullin3 adaptors suppressing histone deacetylase and Hedgehog activity in medulloblastoma.</title>
        <authorList>
            <person name="De Smaele E."/>
            <person name="Di Marcotullio L."/>
            <person name="Moretti M."/>
            <person name="Pelloni M."/>
            <person name="Occhione M.A."/>
            <person name="Infante P."/>
            <person name="Cucchi D."/>
            <person name="Greco A."/>
            <person name="Pietrosanti L."/>
            <person name="Todorovic J."/>
            <person name="Coni S."/>
            <person name="Canettieri G."/>
            <person name="Ferretti E."/>
            <person name="Bei R."/>
            <person name="Maroder M."/>
            <person name="Screpanti I."/>
            <person name="Gulino A."/>
        </authorList>
    </citation>
    <scope>TISSUE SPECIFICITY</scope>
</reference>
<sequence>MDNGDWGYMMSDPVTLNVGGHLYTTSLTTLTRYPDSMLGAMFGGDFPTARDPQGNYFIDRDGPLFRYVLNFLRTSELTLPLDFKEFDLLRKEADFYQIEPLIQCLNDPRPLYPMDTFEEVVELSSTRKLSKYSNPVAVIITQLTITTKVHSLLEGISNYFTKWNKHMMDTRDCQVSFTFGPCDYHQEVSLRVHLMEYITKQGFTIRNTRVHHMSERANENTVEHNWTFCRLARKTDD</sequence>
<proteinExistence type="evidence at transcript level"/>
<keyword id="KW-0963">Cytoplasm</keyword>
<keyword id="KW-0341">Growth regulation</keyword>
<keyword id="KW-1185">Reference proteome</keyword>
<keyword id="KW-0043">Tumor suppressor</keyword>
<keyword id="KW-0833">Ubl conjugation pathway</keyword>
<gene>
    <name type="primary">Kctd6</name>
</gene>
<name>KCTD6_MOUSE</name>
<organism>
    <name type="scientific">Mus musculus</name>
    <name type="common">Mouse</name>
    <dbReference type="NCBI Taxonomy" id="10090"/>
    <lineage>
        <taxon>Eukaryota</taxon>
        <taxon>Metazoa</taxon>
        <taxon>Chordata</taxon>
        <taxon>Craniata</taxon>
        <taxon>Vertebrata</taxon>
        <taxon>Euteleostomi</taxon>
        <taxon>Mammalia</taxon>
        <taxon>Eutheria</taxon>
        <taxon>Euarchontoglires</taxon>
        <taxon>Glires</taxon>
        <taxon>Rodentia</taxon>
        <taxon>Myomorpha</taxon>
        <taxon>Muroidea</taxon>
        <taxon>Muridae</taxon>
        <taxon>Murinae</taxon>
        <taxon>Mus</taxon>
        <taxon>Mus</taxon>
    </lineage>
</organism>
<protein>
    <recommendedName>
        <fullName>BTB/POZ domain-containing protein KCTD6</fullName>
    </recommendedName>
</protein>
<accession>Q8BNL5</accession>
<accession>Q3TXX1</accession>
<comment type="function">
    <text evidence="1">Probable substrate-specific adapter of a BCR (BTB-CUL3-RBX1) E3 ubiquitin-protein ligase complex mediating the ubiquitination and subsequent proteasomal degradation of target proteins. Promotes the ubiquitination of HDAC1; the function seems to depend on KCTD11:KCTD6 oligomerization. Can function as antagonist of the Hedgehog pathway by affecting the nuclear transfer of transcription factor GLI1; the function probably occurs via HDAC1 down-regulation, keeping GLI1 acetylated and inactive. Inhibits cell growth and tumorigenicity of medulloblastoma (MDB). Involved in regulating protein levels of ANK1 isoform Mu7 probably implicating CUL3-dependent proteasomal degradation.</text>
</comment>
<comment type="pathway">
    <text>Protein modification; protein ubiquitination.</text>
</comment>
<comment type="subunit">
    <text evidence="1">Homopentamer. Interacts with KCTD11; KCTD6 and KCTD11 may associate in heteropentameric assemblies. Interacts (via BTB domain) with CUL3; initially a 4:4 stoichiometry has been reported, however, electron microscopy revealed pentameric states with a five-pointed pinwheel shape. The interaction with CUL3 is indicative for a participation in a BCR (BTB-CUL3-RBX1) E3 ubiquitin-protein ligase complex. Interacts with HDAC1; probably indirect as the interaction requires the presence of KCTD11. Interacts with USP21 (preferentially catalytic inactive form). Interacts with ANK1 isoform Mu7; detected in striated muscle. Interacts with USP11 (By similarity).</text>
</comment>
<comment type="subcellular location">
    <subcellularLocation>
        <location evidence="1">Cytoplasm</location>
        <location evidence="1">Myofibril</location>
        <location evidence="1">Sarcomere</location>
        <location evidence="1">M line</location>
    </subcellularLocation>
    <text evidence="1">Colocalizes with ANK1 isoform Mu7 at the M line in differentiated skeletal muscle cells and heart.</text>
</comment>
<comment type="tissue specificity">
    <text evidence="2">Highly expressed in cerebellum and brain.</text>
</comment>
<dbReference type="EMBL" id="AK082924">
    <property type="protein sequence ID" value="BAC38692.1"/>
    <property type="molecule type" value="mRNA"/>
</dbReference>
<dbReference type="EMBL" id="AK159067">
    <property type="protein sequence ID" value="BAE34793.1"/>
    <property type="molecule type" value="mRNA"/>
</dbReference>
<dbReference type="EMBL" id="BC096370">
    <property type="protein sequence ID" value="AAH96370.1"/>
    <property type="molecule type" value="mRNA"/>
</dbReference>
<dbReference type="CCDS" id="CCDS26812.1"/>
<dbReference type="RefSeq" id="NP_001292865.1">
    <property type="nucleotide sequence ID" value="NM_001305936.1"/>
</dbReference>
<dbReference type="RefSeq" id="NP_001292866.1">
    <property type="nucleotide sequence ID" value="NM_001305937.1"/>
</dbReference>
<dbReference type="RefSeq" id="NP_082058.1">
    <property type="nucleotide sequence ID" value="NM_027782.3"/>
</dbReference>
<dbReference type="RefSeq" id="XP_006518168.1">
    <property type="nucleotide sequence ID" value="XM_006518105.3"/>
</dbReference>
<dbReference type="RefSeq" id="XP_036014745.1">
    <property type="nucleotide sequence ID" value="XM_036158852.1"/>
</dbReference>
<dbReference type="SMR" id="Q8BNL5"/>
<dbReference type="FunCoup" id="Q8BNL5">
    <property type="interactions" value="99"/>
</dbReference>
<dbReference type="IntAct" id="Q8BNL5">
    <property type="interactions" value="1"/>
</dbReference>
<dbReference type="STRING" id="10090.ENSMUSP00000129059"/>
<dbReference type="PhosphoSitePlus" id="Q8BNL5"/>
<dbReference type="PaxDb" id="10090-ENSMUSP00000129059"/>
<dbReference type="ProteomicsDB" id="263512"/>
<dbReference type="Antibodypedia" id="15221">
    <property type="antibodies" value="137 antibodies from 20 providers"/>
</dbReference>
<dbReference type="DNASU" id="71393"/>
<dbReference type="Ensembl" id="ENSMUST00000022272.14">
    <property type="protein sequence ID" value="ENSMUSP00000022272.7"/>
    <property type="gene ID" value="ENSMUSG00000021752.15"/>
</dbReference>
<dbReference type="Ensembl" id="ENSMUST00000170111.3">
    <property type="protein sequence ID" value="ENSMUSP00000129059.2"/>
    <property type="gene ID" value="ENSMUSG00000021752.15"/>
</dbReference>
<dbReference type="GeneID" id="71393"/>
<dbReference type="KEGG" id="mmu:71393"/>
<dbReference type="UCSC" id="uc007sex.2">
    <property type="organism name" value="mouse"/>
</dbReference>
<dbReference type="AGR" id="MGI:1918643"/>
<dbReference type="CTD" id="200845"/>
<dbReference type="MGI" id="MGI:1918643">
    <property type="gene designation" value="Kctd6"/>
</dbReference>
<dbReference type="VEuPathDB" id="HostDB:ENSMUSG00000021752"/>
<dbReference type="eggNOG" id="KOG2723">
    <property type="taxonomic scope" value="Eukaryota"/>
</dbReference>
<dbReference type="GeneTree" id="ENSGT00940000157869"/>
<dbReference type="HOGENOM" id="CLU_070345_1_0_1"/>
<dbReference type="InParanoid" id="Q8BNL5"/>
<dbReference type="OMA" id="FTIRMTR"/>
<dbReference type="OrthoDB" id="2414723at2759"/>
<dbReference type="PhylomeDB" id="Q8BNL5"/>
<dbReference type="TreeFam" id="TF315332"/>
<dbReference type="Reactome" id="R-MMU-8951664">
    <property type="pathway name" value="Neddylation"/>
</dbReference>
<dbReference type="Reactome" id="R-MMU-983168">
    <property type="pathway name" value="Antigen processing: Ubiquitination &amp; Proteasome degradation"/>
</dbReference>
<dbReference type="UniPathway" id="UPA00143"/>
<dbReference type="BioGRID-ORCS" id="71393">
    <property type="hits" value="0 hits in 60 CRISPR screens"/>
</dbReference>
<dbReference type="ChiTaRS" id="Kctd6">
    <property type="organism name" value="mouse"/>
</dbReference>
<dbReference type="PRO" id="PR:Q8BNL5"/>
<dbReference type="Proteomes" id="UP000000589">
    <property type="component" value="Chromosome 14"/>
</dbReference>
<dbReference type="RNAct" id="Q8BNL5">
    <property type="molecule type" value="protein"/>
</dbReference>
<dbReference type="Bgee" id="ENSMUSG00000021752">
    <property type="expression patterns" value="Expressed in otolith organ and 228 other cell types or tissues"/>
</dbReference>
<dbReference type="ExpressionAtlas" id="Q8BNL5">
    <property type="expression patterns" value="baseline and differential"/>
</dbReference>
<dbReference type="GO" id="GO:0031430">
    <property type="term" value="C:M band"/>
    <property type="evidence" value="ECO:0007669"/>
    <property type="project" value="UniProtKB-SubCell"/>
</dbReference>
<dbReference type="GO" id="GO:0030506">
    <property type="term" value="F:ankyrin binding"/>
    <property type="evidence" value="ECO:0000266"/>
    <property type="project" value="MGI"/>
</dbReference>
<dbReference type="GO" id="GO:0097602">
    <property type="term" value="F:cullin family protein binding"/>
    <property type="evidence" value="ECO:0007669"/>
    <property type="project" value="Ensembl"/>
</dbReference>
<dbReference type="GO" id="GO:0042802">
    <property type="term" value="F:identical protein binding"/>
    <property type="evidence" value="ECO:0007669"/>
    <property type="project" value="Ensembl"/>
</dbReference>
<dbReference type="GO" id="GO:0045879">
    <property type="term" value="P:negative regulation of smoothened signaling pathway"/>
    <property type="evidence" value="ECO:0007669"/>
    <property type="project" value="Ensembl"/>
</dbReference>
<dbReference type="GO" id="GO:0051260">
    <property type="term" value="P:protein homooligomerization"/>
    <property type="evidence" value="ECO:0007669"/>
    <property type="project" value="InterPro"/>
</dbReference>
<dbReference type="GO" id="GO:0016567">
    <property type="term" value="P:protein ubiquitination"/>
    <property type="evidence" value="ECO:0007669"/>
    <property type="project" value="UniProtKB-UniPathway"/>
</dbReference>
<dbReference type="GO" id="GO:0006511">
    <property type="term" value="P:ubiquitin-dependent protein catabolic process"/>
    <property type="evidence" value="ECO:0007669"/>
    <property type="project" value="Ensembl"/>
</dbReference>
<dbReference type="FunFam" id="3.30.710.10:FF:000003">
    <property type="entry name" value="BTB/POZ domain-containing protein KCTD6 isoform X2"/>
    <property type="match status" value="1"/>
</dbReference>
<dbReference type="Gene3D" id="3.30.710.10">
    <property type="entry name" value="Potassium Channel Kv1.1, Chain A"/>
    <property type="match status" value="1"/>
</dbReference>
<dbReference type="InterPro" id="IPR000210">
    <property type="entry name" value="BTB/POZ_dom"/>
</dbReference>
<dbReference type="InterPro" id="IPR011333">
    <property type="entry name" value="SKP1/BTB/POZ_sf"/>
</dbReference>
<dbReference type="InterPro" id="IPR003131">
    <property type="entry name" value="T1-type_BTB"/>
</dbReference>
<dbReference type="PANTHER" id="PTHR14499:SF10">
    <property type="entry name" value="BTB_POZ DOMAIN-CONTAINING PROTEIN KCTD6"/>
    <property type="match status" value="1"/>
</dbReference>
<dbReference type="PANTHER" id="PTHR14499">
    <property type="entry name" value="POTASSIUM CHANNEL TETRAMERIZATION DOMAIN-CONTAINING"/>
    <property type="match status" value="1"/>
</dbReference>
<dbReference type="Pfam" id="PF02214">
    <property type="entry name" value="BTB_2"/>
    <property type="match status" value="1"/>
</dbReference>
<dbReference type="SMART" id="SM00225">
    <property type="entry name" value="BTB"/>
    <property type="match status" value="1"/>
</dbReference>
<dbReference type="SUPFAM" id="SSF54695">
    <property type="entry name" value="POZ domain"/>
    <property type="match status" value="1"/>
</dbReference>